<gene>
    <name evidence="1" type="primary">rsmA</name>
    <name evidence="1" type="synonym">ksgA</name>
    <name type="ordered locus">BQ04580</name>
</gene>
<keyword id="KW-0963">Cytoplasm</keyword>
<keyword id="KW-0489">Methyltransferase</keyword>
<keyword id="KW-0694">RNA-binding</keyword>
<keyword id="KW-0698">rRNA processing</keyword>
<keyword id="KW-0949">S-adenosyl-L-methionine</keyword>
<keyword id="KW-0808">Transferase</keyword>
<protein>
    <recommendedName>
        <fullName evidence="1">Ribosomal RNA small subunit methyltransferase A</fullName>
        <ecNumber evidence="1">2.1.1.182</ecNumber>
    </recommendedName>
    <alternativeName>
        <fullName evidence="1">16S rRNA (adenine(1518)-N(6)/adenine(1519)-N(6))-dimethyltransferase</fullName>
    </alternativeName>
    <alternativeName>
        <fullName evidence="1">16S rRNA dimethyladenosine transferase</fullName>
    </alternativeName>
    <alternativeName>
        <fullName evidence="1">16S rRNA dimethylase</fullName>
    </alternativeName>
    <alternativeName>
        <fullName evidence="1">S-adenosylmethionine-6-N', N'-adenosyl(rRNA) dimethyltransferase</fullName>
    </alternativeName>
</protein>
<comment type="function">
    <text evidence="1">Specifically dimethylates two adjacent adenosines (A1518 and A1519) in the loop of a conserved hairpin near the 3'-end of 16S rRNA in the 30S particle. May play a critical role in biogenesis of 30S subunits.</text>
</comment>
<comment type="catalytic activity">
    <reaction evidence="1">
        <text>adenosine(1518)/adenosine(1519) in 16S rRNA + 4 S-adenosyl-L-methionine = N(6)-dimethyladenosine(1518)/N(6)-dimethyladenosine(1519) in 16S rRNA + 4 S-adenosyl-L-homocysteine + 4 H(+)</text>
        <dbReference type="Rhea" id="RHEA:19609"/>
        <dbReference type="Rhea" id="RHEA-COMP:10232"/>
        <dbReference type="Rhea" id="RHEA-COMP:10233"/>
        <dbReference type="ChEBI" id="CHEBI:15378"/>
        <dbReference type="ChEBI" id="CHEBI:57856"/>
        <dbReference type="ChEBI" id="CHEBI:59789"/>
        <dbReference type="ChEBI" id="CHEBI:74411"/>
        <dbReference type="ChEBI" id="CHEBI:74493"/>
        <dbReference type="EC" id="2.1.1.182"/>
    </reaction>
</comment>
<comment type="subcellular location">
    <subcellularLocation>
        <location evidence="1">Cytoplasm</location>
    </subcellularLocation>
</comment>
<comment type="similarity">
    <text evidence="1">Belongs to the class I-like SAM-binding methyltransferase superfamily. rRNA adenine N(6)-methyltransferase family. RsmA subfamily.</text>
</comment>
<feature type="chain" id="PRO_0000101488" description="Ribosomal RNA small subunit methyltransferase A">
    <location>
        <begin position="1"/>
        <end position="276"/>
    </location>
</feature>
<feature type="binding site" evidence="1">
    <location>
        <position position="27"/>
    </location>
    <ligand>
        <name>S-adenosyl-L-methionine</name>
        <dbReference type="ChEBI" id="CHEBI:59789"/>
    </ligand>
</feature>
<feature type="binding site" evidence="1">
    <location>
        <position position="29"/>
    </location>
    <ligand>
        <name>S-adenosyl-L-methionine</name>
        <dbReference type="ChEBI" id="CHEBI:59789"/>
    </ligand>
</feature>
<feature type="binding site" evidence="1">
    <location>
        <position position="54"/>
    </location>
    <ligand>
        <name>S-adenosyl-L-methionine</name>
        <dbReference type="ChEBI" id="CHEBI:59789"/>
    </ligand>
</feature>
<feature type="binding site" evidence="1">
    <location>
        <position position="75"/>
    </location>
    <ligand>
        <name>S-adenosyl-L-methionine</name>
        <dbReference type="ChEBI" id="CHEBI:59789"/>
    </ligand>
</feature>
<feature type="binding site" evidence="1">
    <location>
        <position position="101"/>
    </location>
    <ligand>
        <name>S-adenosyl-L-methionine</name>
        <dbReference type="ChEBI" id="CHEBI:59789"/>
    </ligand>
</feature>
<feature type="binding site" evidence="1">
    <location>
        <position position="123"/>
    </location>
    <ligand>
        <name>S-adenosyl-L-methionine</name>
        <dbReference type="ChEBI" id="CHEBI:59789"/>
    </ligand>
</feature>
<organism>
    <name type="scientific">Bartonella quintana (strain Toulouse)</name>
    <name type="common">Rochalimaea quintana</name>
    <dbReference type="NCBI Taxonomy" id="283165"/>
    <lineage>
        <taxon>Bacteria</taxon>
        <taxon>Pseudomonadati</taxon>
        <taxon>Pseudomonadota</taxon>
        <taxon>Alphaproteobacteria</taxon>
        <taxon>Hyphomicrobiales</taxon>
        <taxon>Bartonellaceae</taxon>
        <taxon>Bartonella</taxon>
    </lineage>
</organism>
<accession>Q6G052</accession>
<name>RSMA_BARQU</name>
<proteinExistence type="inferred from homology"/>
<evidence type="ECO:0000255" key="1">
    <source>
        <dbReference type="HAMAP-Rule" id="MF_00607"/>
    </source>
</evidence>
<reference key="1">
    <citation type="journal article" date="2004" name="Proc. Natl. Acad. Sci. U.S.A.">
        <title>The louse-borne human pathogen Bartonella quintana is a genomic derivative of the zoonotic agent Bartonella henselae.</title>
        <authorList>
            <person name="Alsmark U.C.M."/>
            <person name="Frank A.C."/>
            <person name="Karlberg E.O."/>
            <person name="Legault B.-A."/>
            <person name="Ardell D.H."/>
            <person name="Canbaeck B."/>
            <person name="Eriksson A.-S."/>
            <person name="Naeslund A.K."/>
            <person name="Handley S.A."/>
            <person name="Huvet M."/>
            <person name="La Scola B."/>
            <person name="Holmberg M."/>
            <person name="Andersson S.G.E."/>
        </authorList>
    </citation>
    <scope>NUCLEOTIDE SEQUENCE [LARGE SCALE GENOMIC DNA]</scope>
    <source>
        <strain>Toulouse</strain>
    </source>
</reference>
<sequence length="276" mass="30721">MPIDNLPPLREVIDIYGLQAHKSLGQNFLFDLNLTSKIAHQAGNIEGKPVIEVGPGPGGLTRALLAKGALVIAIERDERCIPALLAIEKHYPKKLKLICNDALKQNFSKLFETYPEKPRIIANLPYNIGTQLLLNWLLVEPWPPFYESMTLMFQREVAKRITAKPQSAYYGRLSVLTGWRTTAKIAFDVPPQAFIPAPKITSSVVHIIPRIQPLTCSAQKLSFVTKTAFGQRRKMLRQNLKTLGGEMLLAKAGIDGTRRAETLSISEFVTLANLVI</sequence>
<dbReference type="EC" id="2.1.1.182" evidence="1"/>
<dbReference type="EMBL" id="BX897700">
    <property type="protein sequence ID" value="CAF25957.1"/>
    <property type="molecule type" value="Genomic_DNA"/>
</dbReference>
<dbReference type="RefSeq" id="WP_011179245.1">
    <property type="nucleotide sequence ID" value="NC_005955.1"/>
</dbReference>
<dbReference type="SMR" id="Q6G052"/>
<dbReference type="KEGG" id="bqu:BQ04580"/>
<dbReference type="eggNOG" id="COG0030">
    <property type="taxonomic scope" value="Bacteria"/>
</dbReference>
<dbReference type="HOGENOM" id="CLU_041220_0_1_5"/>
<dbReference type="OrthoDB" id="9814755at2"/>
<dbReference type="Proteomes" id="UP000000597">
    <property type="component" value="Chromosome"/>
</dbReference>
<dbReference type="GO" id="GO:0005829">
    <property type="term" value="C:cytosol"/>
    <property type="evidence" value="ECO:0007669"/>
    <property type="project" value="TreeGrafter"/>
</dbReference>
<dbReference type="GO" id="GO:0052908">
    <property type="term" value="F:16S rRNA (adenine(1518)-N(6)/adenine(1519)-N(6))-dimethyltransferase activity"/>
    <property type="evidence" value="ECO:0007669"/>
    <property type="project" value="UniProtKB-EC"/>
</dbReference>
<dbReference type="GO" id="GO:0003723">
    <property type="term" value="F:RNA binding"/>
    <property type="evidence" value="ECO:0007669"/>
    <property type="project" value="UniProtKB-KW"/>
</dbReference>
<dbReference type="CDD" id="cd02440">
    <property type="entry name" value="AdoMet_MTases"/>
    <property type="match status" value="1"/>
</dbReference>
<dbReference type="FunFam" id="1.10.8.100:FF:000001">
    <property type="entry name" value="Ribosomal RNA small subunit methyltransferase A"/>
    <property type="match status" value="1"/>
</dbReference>
<dbReference type="Gene3D" id="1.10.8.100">
    <property type="entry name" value="Ribosomal RNA adenine dimethylase-like, domain 2"/>
    <property type="match status" value="1"/>
</dbReference>
<dbReference type="Gene3D" id="3.40.50.150">
    <property type="entry name" value="Vaccinia Virus protein VP39"/>
    <property type="match status" value="1"/>
</dbReference>
<dbReference type="HAMAP" id="MF_00607">
    <property type="entry name" value="16SrRNA_methyltr_A"/>
    <property type="match status" value="1"/>
</dbReference>
<dbReference type="InterPro" id="IPR001737">
    <property type="entry name" value="KsgA/Erm"/>
</dbReference>
<dbReference type="InterPro" id="IPR023165">
    <property type="entry name" value="rRNA_Ade_diMease-like_C"/>
</dbReference>
<dbReference type="InterPro" id="IPR020596">
    <property type="entry name" value="rRNA_Ade_Mease_Trfase_CS"/>
</dbReference>
<dbReference type="InterPro" id="IPR020598">
    <property type="entry name" value="rRNA_Ade_methylase_Trfase_N"/>
</dbReference>
<dbReference type="InterPro" id="IPR011530">
    <property type="entry name" value="rRNA_adenine_dimethylase"/>
</dbReference>
<dbReference type="InterPro" id="IPR029063">
    <property type="entry name" value="SAM-dependent_MTases_sf"/>
</dbReference>
<dbReference type="NCBIfam" id="TIGR00755">
    <property type="entry name" value="ksgA"/>
    <property type="match status" value="1"/>
</dbReference>
<dbReference type="PANTHER" id="PTHR11727">
    <property type="entry name" value="DIMETHYLADENOSINE TRANSFERASE"/>
    <property type="match status" value="1"/>
</dbReference>
<dbReference type="PANTHER" id="PTHR11727:SF7">
    <property type="entry name" value="DIMETHYLADENOSINE TRANSFERASE-RELATED"/>
    <property type="match status" value="1"/>
</dbReference>
<dbReference type="Pfam" id="PF00398">
    <property type="entry name" value="RrnaAD"/>
    <property type="match status" value="1"/>
</dbReference>
<dbReference type="SMART" id="SM00650">
    <property type="entry name" value="rADc"/>
    <property type="match status" value="1"/>
</dbReference>
<dbReference type="SUPFAM" id="SSF53335">
    <property type="entry name" value="S-adenosyl-L-methionine-dependent methyltransferases"/>
    <property type="match status" value="1"/>
</dbReference>
<dbReference type="PROSITE" id="PS01131">
    <property type="entry name" value="RRNA_A_DIMETH"/>
    <property type="match status" value="1"/>
</dbReference>
<dbReference type="PROSITE" id="PS51689">
    <property type="entry name" value="SAM_RNA_A_N6_MT"/>
    <property type="match status" value="1"/>
</dbReference>